<proteinExistence type="predicted"/>
<protein>
    <recommendedName>
        <fullName>Uncharacterized protein R699</fullName>
    </recommendedName>
</protein>
<keyword id="KW-1185">Reference proteome</keyword>
<sequence>MEQSNNDDNLLVLGIGISVHKTDGVLRFEKYCQAHNLQYMIVGEGKKWNGGNLESEAGGGQKINELLIALESIKDNKLIVVCDTYDLIPLSGPEEILRKYRFLTPDNKVVFSSELYCWPDASLVERYPKVDTKYKYLNSGAFMGYRDDIYEMIKNGVKDRDDDQLFFSIKFIETDKIVLDYKCELFQAMYRCNSDLVVHKNRIFNGYTNSYPVFAHGNGPAKKLLNHMEGYFMTEPIDGSSNTINTFKLDNEPKVFFALYVDSNDLSALKQFLGKVASIQYGNKVIYLYDRSDNEQNRKLIQISYPNYHTGVTKYVFDDFKKSDAQFYFLLEQNCIITKKDILHELIMQVKDNHRVISPMIGYEQNSTRTNFWGDIEDGYYKRSENYLDLAKHKVRGLWNVPYVYGVILMHESVVRNWDLSMVKYNDKDMDLCFSLRKHTIFMYMINNNNYGYMV</sequence>
<name>YR699_MIMIV</name>
<organismHost>
    <name type="scientific">Acanthamoeba polyphaga</name>
    <name type="common">Amoeba</name>
    <dbReference type="NCBI Taxonomy" id="5757"/>
</organismHost>
<dbReference type="EMBL" id="AY653733">
    <property type="protein sequence ID" value="AAV50960.1"/>
    <property type="molecule type" value="Genomic_DNA"/>
</dbReference>
<dbReference type="SMR" id="Q5UNV6"/>
<dbReference type="KEGG" id="vg:9925352"/>
<dbReference type="OrthoDB" id="7251at10239"/>
<dbReference type="Proteomes" id="UP000001134">
    <property type="component" value="Genome"/>
</dbReference>
<dbReference type="GO" id="GO:0008475">
    <property type="term" value="F:procollagen-lysine 5-dioxygenase activity"/>
    <property type="evidence" value="ECO:0007669"/>
    <property type="project" value="TreeGrafter"/>
</dbReference>
<dbReference type="InterPro" id="IPR050757">
    <property type="entry name" value="Collagen_mod_GT25"/>
</dbReference>
<dbReference type="PANTHER" id="PTHR10730:SF45">
    <property type="entry name" value="PROCOLLAGEN-LYSINE,2-OXOGLUTARATE 5-DIOXYGENASE"/>
    <property type="match status" value="1"/>
</dbReference>
<dbReference type="PANTHER" id="PTHR10730">
    <property type="entry name" value="PROCOLLAGEN-LYSINE,2-OXOGLUTARATE 5-DIOXYGENASE/GLYCOSYLTRANSFERASE 25 FAMILY MEMBER"/>
    <property type="match status" value="1"/>
</dbReference>
<dbReference type="Pfam" id="PF25342">
    <property type="entry name" value="GT_PLOD"/>
    <property type="match status" value="1"/>
</dbReference>
<reference key="1">
    <citation type="journal article" date="2004" name="Science">
        <title>The 1.2-megabase genome sequence of Mimivirus.</title>
        <authorList>
            <person name="Raoult D."/>
            <person name="Audic S."/>
            <person name="Robert C."/>
            <person name="Abergel C."/>
            <person name="Renesto P."/>
            <person name="Ogata H."/>
            <person name="La Scola B."/>
            <person name="Susan M."/>
            <person name="Claverie J.-M."/>
        </authorList>
    </citation>
    <scope>NUCLEOTIDE SEQUENCE [LARGE SCALE GENOMIC DNA]</scope>
    <source>
        <strain>Rowbotham-Bradford</strain>
    </source>
</reference>
<accession>Q5UNV6</accession>
<feature type="chain" id="PRO_0000244052" description="Uncharacterized protein R699">
    <location>
        <begin position="1"/>
        <end position="455"/>
    </location>
</feature>
<organism>
    <name type="scientific">Acanthamoeba polyphaga mimivirus</name>
    <name type="common">APMV</name>
    <dbReference type="NCBI Taxonomy" id="212035"/>
    <lineage>
        <taxon>Viruses</taxon>
        <taxon>Varidnaviria</taxon>
        <taxon>Bamfordvirae</taxon>
        <taxon>Nucleocytoviricota</taxon>
        <taxon>Megaviricetes</taxon>
        <taxon>Imitervirales</taxon>
        <taxon>Mimiviridae</taxon>
        <taxon>Megamimivirinae</taxon>
        <taxon>Mimivirus</taxon>
        <taxon>Mimivirus bradfordmassiliense</taxon>
    </lineage>
</organism>
<gene>
    <name type="ordered locus">MIMI_R699</name>
</gene>